<name>SYQ_ESCF3</name>
<accession>B7LKT3</accession>
<feature type="chain" id="PRO_1000199101" description="Glutamine--tRNA ligase">
    <location>
        <begin position="1"/>
        <end position="554"/>
    </location>
</feature>
<feature type="region of interest" description="Interaction with tRNA" evidence="1">
    <location>
        <begin position="317"/>
        <end position="324"/>
    </location>
</feature>
<feature type="short sequence motif" description="'HIGH' region" evidence="1">
    <location>
        <begin position="34"/>
        <end position="44"/>
    </location>
</feature>
<feature type="short sequence motif" description="'KMSKS' region" evidence="1">
    <location>
        <begin position="268"/>
        <end position="272"/>
    </location>
</feature>
<feature type="binding site" evidence="1">
    <location>
        <begin position="35"/>
        <end position="37"/>
    </location>
    <ligand>
        <name>ATP</name>
        <dbReference type="ChEBI" id="CHEBI:30616"/>
    </ligand>
</feature>
<feature type="binding site" evidence="1">
    <location>
        <begin position="41"/>
        <end position="47"/>
    </location>
    <ligand>
        <name>ATP</name>
        <dbReference type="ChEBI" id="CHEBI:30616"/>
    </ligand>
</feature>
<feature type="binding site" evidence="1">
    <location>
        <position position="67"/>
    </location>
    <ligand>
        <name>L-glutamine</name>
        <dbReference type="ChEBI" id="CHEBI:58359"/>
    </ligand>
</feature>
<feature type="binding site" evidence="1">
    <location>
        <position position="212"/>
    </location>
    <ligand>
        <name>L-glutamine</name>
        <dbReference type="ChEBI" id="CHEBI:58359"/>
    </ligand>
</feature>
<feature type="binding site" evidence="1">
    <location>
        <position position="231"/>
    </location>
    <ligand>
        <name>ATP</name>
        <dbReference type="ChEBI" id="CHEBI:30616"/>
    </ligand>
</feature>
<feature type="binding site" evidence="1">
    <location>
        <begin position="261"/>
        <end position="262"/>
    </location>
    <ligand>
        <name>ATP</name>
        <dbReference type="ChEBI" id="CHEBI:30616"/>
    </ligand>
</feature>
<feature type="binding site" evidence="1">
    <location>
        <begin position="269"/>
        <end position="271"/>
    </location>
    <ligand>
        <name>ATP</name>
        <dbReference type="ChEBI" id="CHEBI:30616"/>
    </ligand>
</feature>
<sequence>MSEAEARPTNFIRQIIDEDLASGKHTTVHTRFPPEPNGYLHIGHAKSICLNFGIAQDYKGQCNLRFDDTNPVKEDIEYVESIKNDVEWLGFHWSGNVRYSSDYFDQLHAYAIELINKGLAYVDELTPEQIREYRGTLTQPGKNSPYRDRSVEENLALFEKMRTGGFEEGKACLRAKIDMASPFIVMRDPVLYRIKFAEHHQTGNKWCIYPMYDFTHCISDALEGITHSLCTLEFQDNRRLYDWVLDNITIPVHPRQYEFSRLNLEYTVMSKRKLNLLVTDKHVEGWDDPRMPTISGLRRRGYTAASIREFCKRIGVTKQDNTIEMASLESCIREDLNENAPRAMAVIDPVKLVIENYQGEGEMVTMPNHPNKPEMGSRQVPFSGEIWIDRADFREEANKQYKRLVLGKEVRLRNAYVIKAERVEKDAEGNITTIFCTYDADTLSKDPADGRKVKGVIHWVSAAHALPVEIRLYDRLFSVPNPGAADDFLSVINPESLVIKQGFAEPSLKDAVAGKAFQFEREGYFCLDSRHSTAEKPVFNRTVGLRDTWAKVGE</sequence>
<dbReference type="EC" id="6.1.1.18" evidence="1"/>
<dbReference type="EMBL" id="CU928158">
    <property type="protein sequence ID" value="CAQ89928.1"/>
    <property type="molecule type" value="Genomic_DNA"/>
</dbReference>
<dbReference type="RefSeq" id="WP_001287164.1">
    <property type="nucleotide sequence ID" value="NC_011740.1"/>
</dbReference>
<dbReference type="SMR" id="B7LKT3"/>
<dbReference type="GeneID" id="75056538"/>
<dbReference type="KEGG" id="efe:EFER_2429"/>
<dbReference type="HOGENOM" id="CLU_001882_2_3_6"/>
<dbReference type="OrthoDB" id="9801560at2"/>
<dbReference type="Proteomes" id="UP000000745">
    <property type="component" value="Chromosome"/>
</dbReference>
<dbReference type="GO" id="GO:0005829">
    <property type="term" value="C:cytosol"/>
    <property type="evidence" value="ECO:0007669"/>
    <property type="project" value="TreeGrafter"/>
</dbReference>
<dbReference type="GO" id="GO:0005524">
    <property type="term" value="F:ATP binding"/>
    <property type="evidence" value="ECO:0007669"/>
    <property type="project" value="UniProtKB-UniRule"/>
</dbReference>
<dbReference type="GO" id="GO:0004819">
    <property type="term" value="F:glutamine-tRNA ligase activity"/>
    <property type="evidence" value="ECO:0007669"/>
    <property type="project" value="UniProtKB-UniRule"/>
</dbReference>
<dbReference type="GO" id="GO:0006425">
    <property type="term" value="P:glutaminyl-tRNA aminoacylation"/>
    <property type="evidence" value="ECO:0007669"/>
    <property type="project" value="InterPro"/>
</dbReference>
<dbReference type="GO" id="GO:0006424">
    <property type="term" value="P:glutamyl-tRNA aminoacylation"/>
    <property type="evidence" value="ECO:0007669"/>
    <property type="project" value="UniProtKB-UniRule"/>
</dbReference>
<dbReference type="CDD" id="cd00807">
    <property type="entry name" value="GlnRS_core"/>
    <property type="match status" value="1"/>
</dbReference>
<dbReference type="FunFam" id="1.10.1160.10:FF:000001">
    <property type="entry name" value="Glutamine--tRNA ligase"/>
    <property type="match status" value="1"/>
</dbReference>
<dbReference type="FunFam" id="2.40.240.10:FF:000001">
    <property type="entry name" value="Glutamine--tRNA ligase"/>
    <property type="match status" value="1"/>
</dbReference>
<dbReference type="FunFam" id="2.40.240.10:FF:000003">
    <property type="entry name" value="Glutamine--tRNA ligase"/>
    <property type="match status" value="1"/>
</dbReference>
<dbReference type="FunFam" id="3.90.800.10:FF:000001">
    <property type="entry name" value="Glutamine--tRNA ligase"/>
    <property type="match status" value="1"/>
</dbReference>
<dbReference type="FunFam" id="3.40.50.620:FF:000037">
    <property type="entry name" value="Glutamine--tRNA ligase cytoplasmic"/>
    <property type="match status" value="1"/>
</dbReference>
<dbReference type="Gene3D" id="1.10.1160.10">
    <property type="entry name" value="Glutamyl-trna Synthetase, Domain 2"/>
    <property type="match status" value="1"/>
</dbReference>
<dbReference type="Gene3D" id="3.90.800.10">
    <property type="entry name" value="Glutamyl-tRNA Synthetase, Domain 3"/>
    <property type="match status" value="1"/>
</dbReference>
<dbReference type="Gene3D" id="3.40.50.620">
    <property type="entry name" value="HUPs"/>
    <property type="match status" value="1"/>
</dbReference>
<dbReference type="Gene3D" id="2.40.240.10">
    <property type="entry name" value="Ribosomal Protein L25, Chain P"/>
    <property type="match status" value="2"/>
</dbReference>
<dbReference type="HAMAP" id="MF_00126">
    <property type="entry name" value="Gln_tRNA_synth"/>
    <property type="match status" value="1"/>
</dbReference>
<dbReference type="InterPro" id="IPR001412">
    <property type="entry name" value="aa-tRNA-synth_I_CS"/>
</dbReference>
<dbReference type="InterPro" id="IPR004514">
    <property type="entry name" value="Gln-tRNA-synth"/>
</dbReference>
<dbReference type="InterPro" id="IPR050132">
    <property type="entry name" value="Gln/Glu-tRNA_Ligase"/>
</dbReference>
<dbReference type="InterPro" id="IPR022861">
    <property type="entry name" value="Gln_tRNA_ligase_bac"/>
</dbReference>
<dbReference type="InterPro" id="IPR000924">
    <property type="entry name" value="Glu/Gln-tRNA-synth"/>
</dbReference>
<dbReference type="InterPro" id="IPR020058">
    <property type="entry name" value="Glu/Gln-tRNA-synth_Ib_cat-dom"/>
</dbReference>
<dbReference type="InterPro" id="IPR020059">
    <property type="entry name" value="Glu/Gln-tRNA-synth_Ib_codon-bd"/>
</dbReference>
<dbReference type="InterPro" id="IPR020061">
    <property type="entry name" value="Glu_tRNA_lig_a-bdl"/>
</dbReference>
<dbReference type="InterPro" id="IPR020056">
    <property type="entry name" value="Rbsml_bL25/Gln-tRNA_synth_N"/>
</dbReference>
<dbReference type="InterPro" id="IPR011035">
    <property type="entry name" value="Ribosomal_bL25/Gln-tRNA_synth"/>
</dbReference>
<dbReference type="InterPro" id="IPR014729">
    <property type="entry name" value="Rossmann-like_a/b/a_fold"/>
</dbReference>
<dbReference type="InterPro" id="IPR049437">
    <property type="entry name" value="tRNA-synt_1c_C2"/>
</dbReference>
<dbReference type="NCBIfam" id="TIGR00440">
    <property type="entry name" value="glnS"/>
    <property type="match status" value="1"/>
</dbReference>
<dbReference type="NCBIfam" id="NF011291">
    <property type="entry name" value="PRK14703.1"/>
    <property type="match status" value="1"/>
</dbReference>
<dbReference type="PANTHER" id="PTHR43097:SF5">
    <property type="entry name" value="GLUTAMATE--TRNA LIGASE"/>
    <property type="match status" value="1"/>
</dbReference>
<dbReference type="PANTHER" id="PTHR43097">
    <property type="entry name" value="GLUTAMINE-TRNA LIGASE"/>
    <property type="match status" value="1"/>
</dbReference>
<dbReference type="Pfam" id="PF00749">
    <property type="entry name" value="tRNA-synt_1c"/>
    <property type="match status" value="1"/>
</dbReference>
<dbReference type="Pfam" id="PF03950">
    <property type="entry name" value="tRNA-synt_1c_C"/>
    <property type="match status" value="1"/>
</dbReference>
<dbReference type="Pfam" id="PF20974">
    <property type="entry name" value="tRNA-synt_1c_C2"/>
    <property type="match status" value="1"/>
</dbReference>
<dbReference type="PRINTS" id="PR00987">
    <property type="entry name" value="TRNASYNTHGLU"/>
</dbReference>
<dbReference type="SUPFAM" id="SSF52374">
    <property type="entry name" value="Nucleotidylyl transferase"/>
    <property type="match status" value="1"/>
</dbReference>
<dbReference type="SUPFAM" id="SSF50715">
    <property type="entry name" value="Ribosomal protein L25-like"/>
    <property type="match status" value="1"/>
</dbReference>
<dbReference type="PROSITE" id="PS00178">
    <property type="entry name" value="AA_TRNA_LIGASE_I"/>
    <property type="match status" value="1"/>
</dbReference>
<comment type="catalytic activity">
    <reaction evidence="1">
        <text>tRNA(Gln) + L-glutamine + ATP = L-glutaminyl-tRNA(Gln) + AMP + diphosphate</text>
        <dbReference type="Rhea" id="RHEA:20121"/>
        <dbReference type="Rhea" id="RHEA-COMP:9662"/>
        <dbReference type="Rhea" id="RHEA-COMP:9681"/>
        <dbReference type="ChEBI" id="CHEBI:30616"/>
        <dbReference type="ChEBI" id="CHEBI:33019"/>
        <dbReference type="ChEBI" id="CHEBI:58359"/>
        <dbReference type="ChEBI" id="CHEBI:78442"/>
        <dbReference type="ChEBI" id="CHEBI:78521"/>
        <dbReference type="ChEBI" id="CHEBI:456215"/>
        <dbReference type="EC" id="6.1.1.18"/>
    </reaction>
</comment>
<comment type="subunit">
    <text evidence="1">Monomer.</text>
</comment>
<comment type="subcellular location">
    <subcellularLocation>
        <location evidence="1">Cytoplasm</location>
    </subcellularLocation>
</comment>
<comment type="similarity">
    <text evidence="1">Belongs to the class-I aminoacyl-tRNA synthetase family.</text>
</comment>
<protein>
    <recommendedName>
        <fullName evidence="1">Glutamine--tRNA ligase</fullName>
        <ecNumber evidence="1">6.1.1.18</ecNumber>
    </recommendedName>
    <alternativeName>
        <fullName evidence="1">Glutaminyl-tRNA synthetase</fullName>
        <shortName evidence="1">GlnRS</shortName>
    </alternativeName>
</protein>
<proteinExistence type="inferred from homology"/>
<organism>
    <name type="scientific">Escherichia fergusonii (strain ATCC 35469 / DSM 13698 / CCUG 18766 / IAM 14443 / JCM 21226 / LMG 7866 / NBRC 102419 / NCTC 12128 / CDC 0568-73)</name>
    <dbReference type="NCBI Taxonomy" id="585054"/>
    <lineage>
        <taxon>Bacteria</taxon>
        <taxon>Pseudomonadati</taxon>
        <taxon>Pseudomonadota</taxon>
        <taxon>Gammaproteobacteria</taxon>
        <taxon>Enterobacterales</taxon>
        <taxon>Enterobacteriaceae</taxon>
        <taxon>Escherichia</taxon>
    </lineage>
</organism>
<reference key="1">
    <citation type="journal article" date="2009" name="PLoS Genet.">
        <title>Organised genome dynamics in the Escherichia coli species results in highly diverse adaptive paths.</title>
        <authorList>
            <person name="Touchon M."/>
            <person name="Hoede C."/>
            <person name="Tenaillon O."/>
            <person name="Barbe V."/>
            <person name="Baeriswyl S."/>
            <person name="Bidet P."/>
            <person name="Bingen E."/>
            <person name="Bonacorsi S."/>
            <person name="Bouchier C."/>
            <person name="Bouvet O."/>
            <person name="Calteau A."/>
            <person name="Chiapello H."/>
            <person name="Clermont O."/>
            <person name="Cruveiller S."/>
            <person name="Danchin A."/>
            <person name="Diard M."/>
            <person name="Dossat C."/>
            <person name="Karoui M.E."/>
            <person name="Frapy E."/>
            <person name="Garry L."/>
            <person name="Ghigo J.M."/>
            <person name="Gilles A.M."/>
            <person name="Johnson J."/>
            <person name="Le Bouguenec C."/>
            <person name="Lescat M."/>
            <person name="Mangenot S."/>
            <person name="Martinez-Jehanne V."/>
            <person name="Matic I."/>
            <person name="Nassif X."/>
            <person name="Oztas S."/>
            <person name="Petit M.A."/>
            <person name="Pichon C."/>
            <person name="Rouy Z."/>
            <person name="Ruf C.S."/>
            <person name="Schneider D."/>
            <person name="Tourret J."/>
            <person name="Vacherie B."/>
            <person name="Vallenet D."/>
            <person name="Medigue C."/>
            <person name="Rocha E.P.C."/>
            <person name="Denamur E."/>
        </authorList>
    </citation>
    <scope>NUCLEOTIDE SEQUENCE [LARGE SCALE GENOMIC DNA]</scope>
    <source>
        <strain>ATCC 35469 / DSM 13698 / BCRC 15582 / CCUG 18766 / IAM 14443 / JCM 21226 / LMG 7866 / NBRC 102419 / NCTC 12128 / CDC 0568-73</strain>
    </source>
</reference>
<gene>
    <name evidence="1" type="primary">glnS</name>
    <name type="ordered locus">EFER_2429</name>
</gene>
<keyword id="KW-0030">Aminoacyl-tRNA synthetase</keyword>
<keyword id="KW-0067">ATP-binding</keyword>
<keyword id="KW-0963">Cytoplasm</keyword>
<keyword id="KW-0436">Ligase</keyword>
<keyword id="KW-0547">Nucleotide-binding</keyword>
<keyword id="KW-0648">Protein biosynthesis</keyword>
<evidence type="ECO:0000255" key="1">
    <source>
        <dbReference type="HAMAP-Rule" id="MF_00126"/>
    </source>
</evidence>